<name>PANB1_HAHCH</name>
<accession>Q2SNS0</accession>
<protein>
    <recommendedName>
        <fullName evidence="1">3-methyl-2-oxobutanoate hydroxymethyltransferase 1</fullName>
        <ecNumber evidence="1">2.1.2.11</ecNumber>
    </recommendedName>
    <alternativeName>
        <fullName evidence="1">Ketopantoate hydroxymethyltransferase 1</fullName>
        <shortName evidence="1">KPHMT 1</shortName>
    </alternativeName>
</protein>
<reference key="1">
    <citation type="journal article" date="2005" name="Nucleic Acids Res.">
        <title>Genomic blueprint of Hahella chejuensis, a marine microbe producing an algicidal agent.</title>
        <authorList>
            <person name="Jeong H."/>
            <person name="Yim J.H."/>
            <person name="Lee C."/>
            <person name="Choi S.-H."/>
            <person name="Park Y.K."/>
            <person name="Yoon S.H."/>
            <person name="Hur C.-G."/>
            <person name="Kang H.-Y."/>
            <person name="Kim D."/>
            <person name="Lee H.H."/>
            <person name="Park K.H."/>
            <person name="Park S.-H."/>
            <person name="Park H.-S."/>
            <person name="Lee H.K."/>
            <person name="Oh T.K."/>
            <person name="Kim J.F."/>
        </authorList>
    </citation>
    <scope>NUCLEOTIDE SEQUENCE [LARGE SCALE GENOMIC DNA]</scope>
    <source>
        <strain>KCTC 2396</strain>
    </source>
</reference>
<gene>
    <name evidence="1" type="primary">panB1</name>
    <name type="ordered locus">HCH_00810</name>
</gene>
<feature type="chain" id="PRO_0000297278" description="3-methyl-2-oxobutanoate hydroxymethyltransferase 1">
    <location>
        <begin position="1"/>
        <end position="278"/>
    </location>
</feature>
<feature type="active site" description="Proton acceptor" evidence="1">
    <location>
        <position position="187"/>
    </location>
</feature>
<feature type="binding site" evidence="1">
    <location>
        <begin position="49"/>
        <end position="50"/>
    </location>
    <ligand>
        <name>3-methyl-2-oxobutanoate</name>
        <dbReference type="ChEBI" id="CHEBI:11851"/>
    </ligand>
</feature>
<feature type="binding site" evidence="1">
    <location>
        <position position="49"/>
    </location>
    <ligand>
        <name>Mg(2+)</name>
        <dbReference type="ChEBI" id="CHEBI:18420"/>
    </ligand>
</feature>
<feature type="binding site" evidence="1">
    <location>
        <position position="88"/>
    </location>
    <ligand>
        <name>3-methyl-2-oxobutanoate</name>
        <dbReference type="ChEBI" id="CHEBI:11851"/>
    </ligand>
</feature>
<feature type="binding site" evidence="1">
    <location>
        <position position="88"/>
    </location>
    <ligand>
        <name>Mg(2+)</name>
        <dbReference type="ChEBI" id="CHEBI:18420"/>
    </ligand>
</feature>
<feature type="binding site" evidence="1">
    <location>
        <position position="118"/>
    </location>
    <ligand>
        <name>3-methyl-2-oxobutanoate</name>
        <dbReference type="ChEBI" id="CHEBI:11851"/>
    </ligand>
</feature>
<feature type="binding site" evidence="1">
    <location>
        <position position="120"/>
    </location>
    <ligand>
        <name>Mg(2+)</name>
        <dbReference type="ChEBI" id="CHEBI:18420"/>
    </ligand>
</feature>
<sequence length="278" mass="30102">MSTHVDRKRITIPQIRSMKGKGSIVSLTAYTTPMAQMMDEFVDLIIVGDSTGMVAYGFNSTMSVTLDMMINHGAAVTRGVSKACVIVDMPFGSFQESPQQAYRNAARVLVETQAQGVKMEGGAELLETVDFLVRRGIPVMPHIGLTPQHANVQGGFKAQIRTEEEINAFIKLGRAFEEAGAFALLVEGAFEEAARKVTAAVTIPTVGIGASPECDGQVLVTEDILGLFSGYTPKFAKRYVDLSQPIKEAFSRYAHEVRSGEFPAMEHCFGVRKNSDGG</sequence>
<evidence type="ECO:0000255" key="1">
    <source>
        <dbReference type="HAMAP-Rule" id="MF_00156"/>
    </source>
</evidence>
<proteinExistence type="inferred from homology"/>
<keyword id="KW-0963">Cytoplasm</keyword>
<keyword id="KW-0460">Magnesium</keyword>
<keyword id="KW-0479">Metal-binding</keyword>
<keyword id="KW-0566">Pantothenate biosynthesis</keyword>
<keyword id="KW-1185">Reference proteome</keyword>
<keyword id="KW-0808">Transferase</keyword>
<comment type="function">
    <text evidence="1">Catalyzes the reversible reaction in which hydroxymethyl group from 5,10-methylenetetrahydrofolate is transferred onto alpha-ketoisovalerate to form ketopantoate.</text>
</comment>
<comment type="catalytic activity">
    <reaction evidence="1">
        <text>3-methyl-2-oxobutanoate + (6R)-5,10-methylene-5,6,7,8-tetrahydrofolate + H2O = 2-dehydropantoate + (6S)-5,6,7,8-tetrahydrofolate</text>
        <dbReference type="Rhea" id="RHEA:11824"/>
        <dbReference type="ChEBI" id="CHEBI:11561"/>
        <dbReference type="ChEBI" id="CHEBI:11851"/>
        <dbReference type="ChEBI" id="CHEBI:15377"/>
        <dbReference type="ChEBI" id="CHEBI:15636"/>
        <dbReference type="ChEBI" id="CHEBI:57453"/>
        <dbReference type="EC" id="2.1.2.11"/>
    </reaction>
</comment>
<comment type="cofactor">
    <cofactor evidence="1">
        <name>Mg(2+)</name>
        <dbReference type="ChEBI" id="CHEBI:18420"/>
    </cofactor>
    <text evidence="1">Binds 1 Mg(2+) ion per subunit.</text>
</comment>
<comment type="pathway">
    <text evidence="1">Cofactor biosynthesis; (R)-pantothenate biosynthesis; (R)-pantoate from 3-methyl-2-oxobutanoate: step 1/2.</text>
</comment>
<comment type="subunit">
    <text evidence="1">Homodecamer; pentamer of dimers.</text>
</comment>
<comment type="subcellular location">
    <subcellularLocation>
        <location evidence="1">Cytoplasm</location>
    </subcellularLocation>
</comment>
<comment type="similarity">
    <text evidence="1">Belongs to the PanB family.</text>
</comment>
<dbReference type="EC" id="2.1.2.11" evidence="1"/>
<dbReference type="EMBL" id="CP000155">
    <property type="protein sequence ID" value="ABC27704.1"/>
    <property type="molecule type" value="Genomic_DNA"/>
</dbReference>
<dbReference type="RefSeq" id="WP_011394781.1">
    <property type="nucleotide sequence ID" value="NC_007645.1"/>
</dbReference>
<dbReference type="SMR" id="Q2SNS0"/>
<dbReference type="STRING" id="349521.HCH_00810"/>
<dbReference type="KEGG" id="hch:HCH_00810"/>
<dbReference type="eggNOG" id="COG0413">
    <property type="taxonomic scope" value="Bacteria"/>
</dbReference>
<dbReference type="HOGENOM" id="CLU_036645_1_0_6"/>
<dbReference type="OrthoDB" id="9781789at2"/>
<dbReference type="UniPathway" id="UPA00028">
    <property type="reaction ID" value="UER00003"/>
</dbReference>
<dbReference type="Proteomes" id="UP000000238">
    <property type="component" value="Chromosome"/>
</dbReference>
<dbReference type="GO" id="GO:0005737">
    <property type="term" value="C:cytoplasm"/>
    <property type="evidence" value="ECO:0007669"/>
    <property type="project" value="UniProtKB-SubCell"/>
</dbReference>
<dbReference type="GO" id="GO:0003864">
    <property type="term" value="F:3-methyl-2-oxobutanoate hydroxymethyltransferase activity"/>
    <property type="evidence" value="ECO:0007669"/>
    <property type="project" value="UniProtKB-UniRule"/>
</dbReference>
<dbReference type="GO" id="GO:0000287">
    <property type="term" value="F:magnesium ion binding"/>
    <property type="evidence" value="ECO:0007669"/>
    <property type="project" value="TreeGrafter"/>
</dbReference>
<dbReference type="GO" id="GO:0015940">
    <property type="term" value="P:pantothenate biosynthetic process"/>
    <property type="evidence" value="ECO:0007669"/>
    <property type="project" value="UniProtKB-UniRule"/>
</dbReference>
<dbReference type="CDD" id="cd06557">
    <property type="entry name" value="KPHMT-like"/>
    <property type="match status" value="1"/>
</dbReference>
<dbReference type="FunFam" id="3.20.20.60:FF:000003">
    <property type="entry name" value="3-methyl-2-oxobutanoate hydroxymethyltransferase"/>
    <property type="match status" value="1"/>
</dbReference>
<dbReference type="Gene3D" id="3.20.20.60">
    <property type="entry name" value="Phosphoenolpyruvate-binding domains"/>
    <property type="match status" value="1"/>
</dbReference>
<dbReference type="HAMAP" id="MF_00156">
    <property type="entry name" value="PanB"/>
    <property type="match status" value="1"/>
</dbReference>
<dbReference type="InterPro" id="IPR003700">
    <property type="entry name" value="Pantoate_hydroxy_MeTrfase"/>
</dbReference>
<dbReference type="InterPro" id="IPR015813">
    <property type="entry name" value="Pyrv/PenolPyrv_kinase-like_dom"/>
</dbReference>
<dbReference type="InterPro" id="IPR040442">
    <property type="entry name" value="Pyrv_kinase-like_dom_sf"/>
</dbReference>
<dbReference type="NCBIfam" id="TIGR00222">
    <property type="entry name" value="panB"/>
    <property type="match status" value="1"/>
</dbReference>
<dbReference type="NCBIfam" id="NF001452">
    <property type="entry name" value="PRK00311.1"/>
    <property type="match status" value="1"/>
</dbReference>
<dbReference type="PANTHER" id="PTHR20881">
    <property type="entry name" value="3-METHYL-2-OXOBUTANOATE HYDROXYMETHYLTRANSFERASE"/>
    <property type="match status" value="1"/>
</dbReference>
<dbReference type="PANTHER" id="PTHR20881:SF0">
    <property type="entry name" value="3-METHYL-2-OXOBUTANOATE HYDROXYMETHYLTRANSFERASE"/>
    <property type="match status" value="1"/>
</dbReference>
<dbReference type="Pfam" id="PF02548">
    <property type="entry name" value="Pantoate_transf"/>
    <property type="match status" value="1"/>
</dbReference>
<dbReference type="PIRSF" id="PIRSF000388">
    <property type="entry name" value="Pantoate_hydroxy_MeTrfase"/>
    <property type="match status" value="1"/>
</dbReference>
<dbReference type="SUPFAM" id="SSF51621">
    <property type="entry name" value="Phosphoenolpyruvate/pyruvate domain"/>
    <property type="match status" value="1"/>
</dbReference>
<organism>
    <name type="scientific">Hahella chejuensis (strain KCTC 2396)</name>
    <dbReference type="NCBI Taxonomy" id="349521"/>
    <lineage>
        <taxon>Bacteria</taxon>
        <taxon>Pseudomonadati</taxon>
        <taxon>Pseudomonadota</taxon>
        <taxon>Gammaproteobacteria</taxon>
        <taxon>Oceanospirillales</taxon>
        <taxon>Hahellaceae</taxon>
        <taxon>Hahella</taxon>
    </lineage>
</organism>